<keyword id="KW-0067">ATP-binding</keyword>
<keyword id="KW-0418">Kinase</keyword>
<keyword id="KW-0441">Lipid A biosynthesis</keyword>
<keyword id="KW-0444">Lipid biosynthesis</keyword>
<keyword id="KW-0443">Lipid metabolism</keyword>
<keyword id="KW-0547">Nucleotide-binding</keyword>
<keyword id="KW-0808">Transferase</keyword>
<feature type="chain" id="PRO_1000123730" description="Tetraacyldisaccharide 4'-kinase">
    <location>
        <begin position="1"/>
        <end position="332"/>
    </location>
</feature>
<feature type="binding site" evidence="1">
    <location>
        <begin position="60"/>
        <end position="67"/>
    </location>
    <ligand>
        <name>ATP</name>
        <dbReference type="ChEBI" id="CHEBI:30616"/>
    </ligand>
</feature>
<proteinExistence type="inferred from homology"/>
<protein>
    <recommendedName>
        <fullName evidence="1">Tetraacyldisaccharide 4'-kinase</fullName>
        <ecNumber evidence="1">2.7.1.130</ecNumber>
    </recommendedName>
    <alternativeName>
        <fullName evidence="1">Lipid A 4'-kinase</fullName>
    </alternativeName>
</protein>
<gene>
    <name evidence="1" type="primary">lpxK</name>
    <name type="ordered locus">PLES_20811</name>
</gene>
<sequence>MSFSERLLAAWYQGHPALALLRPLEALYRRVANGRRADFLSGRKPAYRAPLPVLVVGNITVGGTGKTPMILWMIEHCRARGLRVGVISRGYGARPPTTPWRVRAEQDAAEAGDEPLMIVRRSGVPLMIDPDRPRALQALLAEEQLDLVLCDDGLQHYRLARDLELVLIDAARGLGNGRCLPAGPLREPAERLESVDALLYNGADEDPDGGYAFRLQPTALINLQSGERRPLEHFPAGQEVHALAGIGNPQRFFRTLEALHWRAIPHAFPDHATYTAAELAFSPPLPLLMTEKDAVKCRAFAAADWWYLAVDAVPSPAFVAWFDARLEHLLAR</sequence>
<dbReference type="EC" id="2.7.1.130" evidence="1"/>
<dbReference type="EMBL" id="FM209186">
    <property type="protein sequence ID" value="CAW26808.1"/>
    <property type="molecule type" value="Genomic_DNA"/>
</dbReference>
<dbReference type="RefSeq" id="WP_003091159.1">
    <property type="nucleotide sequence ID" value="NC_011770.1"/>
</dbReference>
<dbReference type="SMR" id="B7V147"/>
<dbReference type="KEGG" id="pag:PLES_20811"/>
<dbReference type="HOGENOM" id="CLU_038816_2_0_6"/>
<dbReference type="UniPathway" id="UPA00359">
    <property type="reaction ID" value="UER00482"/>
</dbReference>
<dbReference type="GO" id="GO:0005886">
    <property type="term" value="C:plasma membrane"/>
    <property type="evidence" value="ECO:0007669"/>
    <property type="project" value="TreeGrafter"/>
</dbReference>
<dbReference type="GO" id="GO:0005524">
    <property type="term" value="F:ATP binding"/>
    <property type="evidence" value="ECO:0007669"/>
    <property type="project" value="UniProtKB-UniRule"/>
</dbReference>
<dbReference type="GO" id="GO:0009029">
    <property type="term" value="F:tetraacyldisaccharide 4'-kinase activity"/>
    <property type="evidence" value="ECO:0007669"/>
    <property type="project" value="UniProtKB-UniRule"/>
</dbReference>
<dbReference type="GO" id="GO:0009245">
    <property type="term" value="P:lipid A biosynthetic process"/>
    <property type="evidence" value="ECO:0007669"/>
    <property type="project" value="UniProtKB-UniRule"/>
</dbReference>
<dbReference type="GO" id="GO:0009244">
    <property type="term" value="P:lipopolysaccharide core region biosynthetic process"/>
    <property type="evidence" value="ECO:0007669"/>
    <property type="project" value="TreeGrafter"/>
</dbReference>
<dbReference type="HAMAP" id="MF_00409">
    <property type="entry name" value="LpxK"/>
    <property type="match status" value="1"/>
</dbReference>
<dbReference type="InterPro" id="IPR003758">
    <property type="entry name" value="LpxK"/>
</dbReference>
<dbReference type="InterPro" id="IPR027417">
    <property type="entry name" value="P-loop_NTPase"/>
</dbReference>
<dbReference type="NCBIfam" id="TIGR00682">
    <property type="entry name" value="lpxK"/>
    <property type="match status" value="1"/>
</dbReference>
<dbReference type="PANTHER" id="PTHR42724">
    <property type="entry name" value="TETRAACYLDISACCHARIDE 4'-KINASE"/>
    <property type="match status" value="1"/>
</dbReference>
<dbReference type="PANTHER" id="PTHR42724:SF1">
    <property type="entry name" value="TETRAACYLDISACCHARIDE 4'-KINASE, MITOCHONDRIAL-RELATED"/>
    <property type="match status" value="1"/>
</dbReference>
<dbReference type="Pfam" id="PF02606">
    <property type="entry name" value="LpxK"/>
    <property type="match status" value="1"/>
</dbReference>
<dbReference type="SUPFAM" id="SSF52540">
    <property type="entry name" value="P-loop containing nucleoside triphosphate hydrolases"/>
    <property type="match status" value="1"/>
</dbReference>
<name>LPXK_PSEA8</name>
<accession>B7V147</accession>
<comment type="function">
    <text evidence="1">Transfers the gamma-phosphate of ATP to the 4'-position of a tetraacyldisaccharide 1-phosphate intermediate (termed DS-1-P) to form tetraacyldisaccharide 1,4'-bis-phosphate (lipid IVA).</text>
</comment>
<comment type="catalytic activity">
    <reaction evidence="1">
        <text>a lipid A disaccharide + ATP = a lipid IVA + ADP + H(+)</text>
        <dbReference type="Rhea" id="RHEA:67840"/>
        <dbReference type="ChEBI" id="CHEBI:15378"/>
        <dbReference type="ChEBI" id="CHEBI:30616"/>
        <dbReference type="ChEBI" id="CHEBI:176343"/>
        <dbReference type="ChEBI" id="CHEBI:176425"/>
        <dbReference type="ChEBI" id="CHEBI:456216"/>
        <dbReference type="EC" id="2.7.1.130"/>
    </reaction>
</comment>
<comment type="pathway">
    <text evidence="1">Glycolipid biosynthesis; lipid IV(A) biosynthesis; lipid IV(A) from (3R)-3-hydroxytetradecanoyl-[acyl-carrier-protein] and UDP-N-acetyl-alpha-D-glucosamine: step 6/6.</text>
</comment>
<comment type="similarity">
    <text evidence="1">Belongs to the LpxK family.</text>
</comment>
<evidence type="ECO:0000255" key="1">
    <source>
        <dbReference type="HAMAP-Rule" id="MF_00409"/>
    </source>
</evidence>
<organism>
    <name type="scientific">Pseudomonas aeruginosa (strain LESB58)</name>
    <dbReference type="NCBI Taxonomy" id="557722"/>
    <lineage>
        <taxon>Bacteria</taxon>
        <taxon>Pseudomonadati</taxon>
        <taxon>Pseudomonadota</taxon>
        <taxon>Gammaproteobacteria</taxon>
        <taxon>Pseudomonadales</taxon>
        <taxon>Pseudomonadaceae</taxon>
        <taxon>Pseudomonas</taxon>
    </lineage>
</organism>
<reference key="1">
    <citation type="journal article" date="2009" name="Genome Res.">
        <title>Newly introduced genomic prophage islands are critical determinants of in vivo competitiveness in the Liverpool epidemic strain of Pseudomonas aeruginosa.</title>
        <authorList>
            <person name="Winstanley C."/>
            <person name="Langille M.G.I."/>
            <person name="Fothergill J.L."/>
            <person name="Kukavica-Ibrulj I."/>
            <person name="Paradis-Bleau C."/>
            <person name="Sanschagrin F."/>
            <person name="Thomson N.R."/>
            <person name="Winsor G.L."/>
            <person name="Quail M.A."/>
            <person name="Lennard N."/>
            <person name="Bignell A."/>
            <person name="Clarke L."/>
            <person name="Seeger K."/>
            <person name="Saunders D."/>
            <person name="Harris D."/>
            <person name="Parkhill J."/>
            <person name="Hancock R.E.W."/>
            <person name="Brinkman F.S.L."/>
            <person name="Levesque R.C."/>
        </authorList>
    </citation>
    <scope>NUCLEOTIDE SEQUENCE [LARGE SCALE GENOMIC DNA]</scope>
    <source>
        <strain>LESB58</strain>
    </source>
</reference>